<protein>
    <recommendedName>
        <fullName>Purple acid phosphatase</fullName>
        <ecNumber>3.1.3.2</ecNumber>
    </recommendedName>
    <alternativeName>
        <fullName>Zinc(II) purple acid phosphatase</fullName>
    </alternativeName>
</protein>
<keyword id="KW-0903">Direct protein sequencing</keyword>
<keyword id="KW-1015">Disulfide bond</keyword>
<keyword id="KW-0325">Glycoprotein</keyword>
<keyword id="KW-0378">Hydrolase</keyword>
<keyword id="KW-0408">Iron</keyword>
<keyword id="KW-0479">Metal-binding</keyword>
<keyword id="KW-1185">Reference proteome</keyword>
<keyword id="KW-0964">Secreted</keyword>
<keyword id="KW-0732">Signal</keyword>
<keyword id="KW-0862">Zinc</keyword>
<gene>
    <name evidence="7" type="primary">PAP</name>
</gene>
<evidence type="ECO:0000250" key="1"/>
<evidence type="ECO:0000250" key="2">
    <source>
        <dbReference type="UniProtKB" id="P80366"/>
    </source>
</evidence>
<evidence type="ECO:0000255" key="3"/>
<evidence type="ECO:0000269" key="4">
    <source>
    </source>
</evidence>
<evidence type="ECO:0000269" key="5">
    <source>
    </source>
</evidence>
<evidence type="ECO:0000305" key="6"/>
<evidence type="ECO:0000312" key="7">
    <source>
        <dbReference type="EMBL" id="AAF19820.1"/>
    </source>
</evidence>
<name>PPAF_SOYBN</name>
<organism>
    <name type="scientific">Glycine max</name>
    <name type="common">Soybean</name>
    <name type="synonym">Glycine hispida</name>
    <dbReference type="NCBI Taxonomy" id="3847"/>
    <lineage>
        <taxon>Eukaryota</taxon>
        <taxon>Viridiplantae</taxon>
        <taxon>Streptophyta</taxon>
        <taxon>Embryophyta</taxon>
        <taxon>Tracheophyta</taxon>
        <taxon>Spermatophyta</taxon>
        <taxon>Magnoliopsida</taxon>
        <taxon>eudicotyledons</taxon>
        <taxon>Gunneridae</taxon>
        <taxon>Pentapetalae</taxon>
        <taxon>rosids</taxon>
        <taxon>fabids</taxon>
        <taxon>Fabales</taxon>
        <taxon>Fabaceae</taxon>
        <taxon>Papilionoideae</taxon>
        <taxon>50 kb inversion clade</taxon>
        <taxon>NPAAA clade</taxon>
        <taxon>indigoferoid/millettioid clade</taxon>
        <taxon>Phaseoleae</taxon>
        <taxon>Glycine</taxon>
        <taxon>Glycine subgen. Soja</taxon>
    </lineage>
</organism>
<dbReference type="EC" id="3.1.3.2"/>
<dbReference type="EMBL" id="AF200824">
    <property type="protein sequence ID" value="AAF19820.1"/>
    <property type="molecule type" value="mRNA"/>
</dbReference>
<dbReference type="PIR" id="B59200">
    <property type="entry name" value="B59200"/>
</dbReference>
<dbReference type="SMR" id="Q09131"/>
<dbReference type="FunCoup" id="Q09131">
    <property type="interactions" value="192"/>
</dbReference>
<dbReference type="STRING" id="3847.Q09131"/>
<dbReference type="GlyCosmos" id="Q09131">
    <property type="glycosylation" value="6 sites, No reported glycans"/>
</dbReference>
<dbReference type="PaxDb" id="3847-GLYMA09G36360.1"/>
<dbReference type="eggNOG" id="KOG1378">
    <property type="taxonomic scope" value="Eukaryota"/>
</dbReference>
<dbReference type="InParanoid" id="Q09131"/>
<dbReference type="BioCyc" id="MetaCyc:MONOMER-15155"/>
<dbReference type="SABIO-RK" id="Q09131"/>
<dbReference type="Proteomes" id="UP000008827">
    <property type="component" value="Unplaced"/>
</dbReference>
<dbReference type="GO" id="GO:0005615">
    <property type="term" value="C:extracellular space"/>
    <property type="evidence" value="ECO:0000314"/>
    <property type="project" value="UniProtKB"/>
</dbReference>
<dbReference type="GO" id="GO:0003993">
    <property type="term" value="F:acid phosphatase activity"/>
    <property type="evidence" value="ECO:0000314"/>
    <property type="project" value="UniProtKB"/>
</dbReference>
<dbReference type="GO" id="GO:0030145">
    <property type="term" value="F:manganese ion binding"/>
    <property type="evidence" value="ECO:0000314"/>
    <property type="project" value="UniProtKB"/>
</dbReference>
<dbReference type="GO" id="GO:0046872">
    <property type="term" value="F:metal ion binding"/>
    <property type="evidence" value="ECO:0000314"/>
    <property type="project" value="UniProtKB"/>
</dbReference>
<dbReference type="CDD" id="cd00839">
    <property type="entry name" value="MPP_PAPs"/>
    <property type="match status" value="1"/>
</dbReference>
<dbReference type="FunFam" id="2.60.40.380:FF:000001">
    <property type="entry name" value="Fe(3+)-Zn(2+) purple acid phosphatase"/>
    <property type="match status" value="1"/>
</dbReference>
<dbReference type="FunFam" id="3.60.21.10:FF:000034">
    <property type="entry name" value="Fe(3+)-Zn(2+) purple acid phosphatase"/>
    <property type="match status" value="1"/>
</dbReference>
<dbReference type="Gene3D" id="3.60.21.10">
    <property type="match status" value="1"/>
</dbReference>
<dbReference type="Gene3D" id="2.60.40.380">
    <property type="entry name" value="Purple acid phosphatase-like, N-terminal"/>
    <property type="match status" value="1"/>
</dbReference>
<dbReference type="InterPro" id="IPR004843">
    <property type="entry name" value="Calcineurin-like_PHP_ApaH"/>
</dbReference>
<dbReference type="InterPro" id="IPR029052">
    <property type="entry name" value="Metallo-depent_PP-like"/>
</dbReference>
<dbReference type="InterPro" id="IPR041792">
    <property type="entry name" value="MPP_PAP"/>
</dbReference>
<dbReference type="InterPro" id="IPR039331">
    <property type="entry name" value="PPA-like"/>
</dbReference>
<dbReference type="InterPro" id="IPR008963">
    <property type="entry name" value="Purple_acid_Pase-like_N"/>
</dbReference>
<dbReference type="InterPro" id="IPR015914">
    <property type="entry name" value="Purple_acid_Pase_N"/>
</dbReference>
<dbReference type="InterPro" id="IPR025733">
    <property type="entry name" value="Purple_acid_PPase_C_dom"/>
</dbReference>
<dbReference type="PANTHER" id="PTHR22953">
    <property type="entry name" value="ACID PHOSPHATASE RELATED"/>
    <property type="match status" value="1"/>
</dbReference>
<dbReference type="PANTHER" id="PTHR22953:SF86">
    <property type="entry name" value="PURPLE ACID PHOSPHATASE 10"/>
    <property type="match status" value="1"/>
</dbReference>
<dbReference type="Pfam" id="PF00149">
    <property type="entry name" value="Metallophos"/>
    <property type="match status" value="1"/>
</dbReference>
<dbReference type="Pfam" id="PF14008">
    <property type="entry name" value="Metallophos_C"/>
    <property type="match status" value="1"/>
</dbReference>
<dbReference type="Pfam" id="PF16656">
    <property type="entry name" value="Pur_ac_phosph_N"/>
    <property type="match status" value="1"/>
</dbReference>
<dbReference type="SUPFAM" id="SSF56300">
    <property type="entry name" value="Metallo-dependent phosphatases"/>
    <property type="match status" value="1"/>
</dbReference>
<dbReference type="SUPFAM" id="SSF49363">
    <property type="entry name" value="Purple acid phosphatase, N-terminal domain"/>
    <property type="match status" value="1"/>
</dbReference>
<proteinExistence type="evidence at protein level"/>
<sequence length="464" mass="53027">MGVVEGLLALALVLSACVMCNGGSSSPFIRKVEKTVDMPLDSDVFAVPPGYNAPQQVHITQGDLVGKAVIVSWVTVDEPGSSEVHYWSENSDKKKIAEGKLVTYRFFNYSSGFIHHTTIRNLEYKTKYYYEVGLGNTTRQFWFVTPPEIGPDVPYTFGLIGDLGQSFDSNKTLSHYELNPRKGQTVLFVGDLSYADNYPNHDNIRWDSWGRFTERSVAYQPWIWTAGNHENHFAPEIGETVPFKPYTHRYHVPYKASQSTSPFWYSIKRASAHIIVLASYSAYGKYTPQYKWLEKELPKVNRTETPWLIVLMHSPWYNSYNYHYMEGETMRVMYEPWFVQYKVDVVFAGHVHAYERSERVSNVAYNIVNGLCAPVNDKSAPVYITIGDGGTLEGLATNMTEPQPKYSAFREASFGHAIFDITNRTHAHYSWHRNQDGVAVEADSLWSFNRYWHPVDDSTAHVSH</sequence>
<comment type="catalytic activity">
    <reaction evidence="4 5">
        <text>a phosphate monoester + H2O = an alcohol + phosphate</text>
        <dbReference type="Rhea" id="RHEA:15017"/>
        <dbReference type="ChEBI" id="CHEBI:15377"/>
        <dbReference type="ChEBI" id="CHEBI:30879"/>
        <dbReference type="ChEBI" id="CHEBI:43474"/>
        <dbReference type="ChEBI" id="CHEBI:67140"/>
        <dbReference type="EC" id="3.1.3.2"/>
    </reaction>
</comment>
<comment type="cofactor">
    <cofactor evidence="4">
        <name>Fe cation</name>
        <dbReference type="ChEBI" id="CHEBI:24875"/>
    </cofactor>
    <text evidence="4">Binds 1 Fe cation per subunit.</text>
</comment>
<comment type="cofactor">
    <cofactor>
        <name>Zn(2+)</name>
        <dbReference type="ChEBI" id="CHEBI:29105"/>
    </cofactor>
    <cofactor>
        <name>Mn(2+)</name>
        <dbReference type="ChEBI" id="CHEBI:29035"/>
    </cofactor>
    <cofactor>
        <name>Cu(2+)</name>
        <dbReference type="ChEBI" id="CHEBI:29036"/>
    </cofactor>
    <cofactor>
        <name>Mg(2+)</name>
        <dbReference type="ChEBI" id="CHEBI:18420"/>
    </cofactor>
    <text>Binds 1 zinc ion per subunit. Can also use manganese, copper and magnesium ions.</text>
</comment>
<comment type="biophysicochemical properties">
    <absorption>
        <max evidence="4">550 nm</max>
    </absorption>
    <kinetics>
        <KM evidence="4">8 uM for p-NPP (at pH 5.5 and 25 degrees Celsius)</KM>
        <KM evidence="4">5 uM for ATP (at pH 5.5 and 25 degrees Celsius)</KM>
        <KM evidence="4">6 uM for ADP (at pH 5.5 and 25 degrees Celsius)</KM>
        <KM evidence="4">9 uM for AMP (at pH 5.5 and 25 degrees Celsius)</KM>
        <KM evidence="4">9 uM for pyrophosphate (at pH 5.5 and 25 degrees Celsius)</KM>
        <KM evidence="4">30 uM for beta-glycerophosphate (at pH 5.5 and 25 degrees Celsius)</KM>
    </kinetics>
</comment>
<comment type="subunit">
    <text evidence="2 5">Homodimer; disulfide-linked.</text>
</comment>
<comment type="subcellular location">
    <subcellularLocation>
        <location evidence="5">Secreted</location>
    </subcellularLocation>
</comment>
<comment type="similarity">
    <text evidence="6">Belongs to the metallophosphoesterase superfamily. Purple acid phosphatase family.</text>
</comment>
<feature type="signal peptide" evidence="5">
    <location>
        <begin position="1"/>
        <end position="30"/>
    </location>
</feature>
<feature type="chain" id="PRO_0000043380" description="Purple acid phosphatase" evidence="5">
    <location>
        <begin position="31"/>
        <end position="464"/>
    </location>
</feature>
<feature type="active site" description="Proton donor" evidence="2">
    <location>
        <position position="323"/>
    </location>
</feature>
<feature type="binding site" evidence="2">
    <location>
        <position position="162"/>
    </location>
    <ligand>
        <name>Fe cation</name>
        <dbReference type="ChEBI" id="CHEBI:24875"/>
    </ligand>
</feature>
<feature type="binding site" evidence="2">
    <location>
        <position position="191"/>
    </location>
    <ligand>
        <name>Fe cation</name>
        <dbReference type="ChEBI" id="CHEBI:24875"/>
    </ligand>
</feature>
<feature type="binding site" evidence="2">
    <location>
        <position position="191"/>
    </location>
    <ligand>
        <name>Zn(2+)</name>
        <dbReference type="ChEBI" id="CHEBI:29105"/>
    </ligand>
</feature>
<feature type="binding site" evidence="2">
    <location>
        <position position="194"/>
    </location>
    <ligand>
        <name>Fe cation</name>
        <dbReference type="ChEBI" id="CHEBI:24875"/>
    </ligand>
</feature>
<feature type="binding site" evidence="1">
    <location>
        <position position="228"/>
    </location>
    <ligand>
        <name>substrate</name>
    </ligand>
</feature>
<feature type="binding site" evidence="2">
    <location>
        <position position="228"/>
    </location>
    <ligand>
        <name>Zn(2+)</name>
        <dbReference type="ChEBI" id="CHEBI:29105"/>
    </ligand>
</feature>
<feature type="binding site" evidence="2">
    <location>
        <position position="313"/>
    </location>
    <ligand>
        <name>Zn(2+)</name>
        <dbReference type="ChEBI" id="CHEBI:29105"/>
    </ligand>
</feature>
<feature type="binding site" evidence="1">
    <location>
        <begin position="350"/>
        <end position="352"/>
    </location>
    <ligand>
        <name>substrate</name>
    </ligand>
</feature>
<feature type="binding site" evidence="2">
    <location>
        <position position="350"/>
    </location>
    <ligand>
        <name>Zn(2+)</name>
        <dbReference type="ChEBI" id="CHEBI:29105"/>
    </ligand>
</feature>
<feature type="binding site" evidence="2">
    <location>
        <position position="352"/>
    </location>
    <ligand>
        <name>Fe cation</name>
        <dbReference type="ChEBI" id="CHEBI:24875"/>
    </ligand>
</feature>
<feature type="glycosylation site" description="N-linked (GlcNAc...) asparagine" evidence="3">
    <location>
        <position position="108"/>
    </location>
</feature>
<feature type="glycosylation site" description="N-linked (GlcNAc...) asparagine" evidence="3">
    <location>
        <position position="136"/>
    </location>
</feature>
<feature type="glycosylation site" description="N-linked (GlcNAc...) asparagine" evidence="3">
    <location>
        <position position="170"/>
    </location>
</feature>
<feature type="glycosylation site" description="N-linked (GlcNAc...) asparagine" evidence="3">
    <location>
        <position position="301"/>
    </location>
</feature>
<feature type="glycosylation site" description="N-linked (GlcNAc...) asparagine" evidence="3">
    <location>
        <position position="398"/>
    </location>
</feature>
<feature type="glycosylation site" description="N-linked (GlcNAc...) asparagine" evidence="3">
    <location>
        <position position="423"/>
    </location>
</feature>
<feature type="disulfide bond" description="Interchain" evidence="2">
    <location>
        <position position="372"/>
    </location>
</feature>
<feature type="sequence conflict" description="In Ref. 2; AA sequence." evidence="6" ref="2">
    <original>T</original>
    <variation>A</variation>
    <location>
        <position position="35"/>
    </location>
</feature>
<feature type="sequence conflict" description="In Ref. 2; AA sequence." evidence="6" ref="2">
    <original>V</original>
    <variation>R</variation>
    <location>
        <position position="47"/>
    </location>
</feature>
<reference evidence="6 7" key="1">
    <citation type="journal article" date="1999" name="Arch. Biochem. Biophys.">
        <title>Binuclear metal centers in plant purple acid phosphatases: Fe-Mn in sweet potato and Fe-Zn in soybean.</title>
        <authorList>
            <person name="Schenk G."/>
            <person name="Ge Y."/>
            <person name="Carrington L.E."/>
            <person name="Wynne C.J."/>
            <person name="Searle I.R."/>
            <person name="Carroll B.J."/>
            <person name="Hamilton S."/>
            <person name="de Jersey J."/>
        </authorList>
    </citation>
    <scope>NUCLEOTIDE SEQUENCE [MRNA]</scope>
    <scope>CATALYTIC ACTIVITY</scope>
    <scope>COFACTOR</scope>
    <scope>BIOPHYSICOCHEMICAL PROPERTIES</scope>
    <source>
        <strain>cv. Provar</strain>
    </source>
</reference>
<reference key="2">
    <citation type="journal article" date="1992" name="Plant Physiol.">
        <title>Purification and characterization of a secreted purple phosphatase from soybean suspension cultures.</title>
        <authorList>
            <person name="Lebansky B.R."/>
            <person name="McKnight T.D."/>
            <person name="Griffing L.R."/>
        </authorList>
    </citation>
    <scope>PROTEIN SEQUENCE OF 31-47</scope>
    <scope>CATALYTIC ACTIVITY</scope>
    <scope>COFACTOR</scope>
    <scope>SUBUNIT</scope>
    <scope>SUBCELLULAR LOCATION</scope>
</reference>
<accession>Q09131</accession>
<accession>Q9SE01</accession>